<geneLocation type="mitochondrion"/>
<accession>Q9B6D4</accession>
<evidence type="ECO:0000250" key="1"/>
<evidence type="ECO:0000255" key="2"/>
<evidence type="ECO:0000269" key="3">
    <source>
    </source>
</evidence>
<evidence type="ECO:0000305" key="4"/>
<evidence type="ECO:0007829" key="5">
    <source>
        <dbReference type="PDB" id="7O71"/>
    </source>
</evidence>
<keyword id="KW-0002">3D-structure</keyword>
<keyword id="KW-0249">Electron transport</keyword>
<keyword id="KW-0472">Membrane</keyword>
<keyword id="KW-0496">Mitochondrion</keyword>
<keyword id="KW-0520">NAD</keyword>
<keyword id="KW-1185">Reference proteome</keyword>
<keyword id="KW-0679">Respiratory chain</keyword>
<keyword id="KW-1278">Translocase</keyword>
<keyword id="KW-0812">Transmembrane</keyword>
<keyword id="KW-1133">Transmembrane helix</keyword>
<keyword id="KW-0813">Transport</keyword>
<keyword id="KW-0830">Ubiquinone</keyword>
<proteinExistence type="evidence at protein level"/>
<reference key="1">
    <citation type="journal article" date="2001" name="Comp. Funct. Genomics">
        <title>The complete mitochondrial genome of Yarrowia lipolytica.</title>
        <authorList>
            <person name="Kerscher S."/>
            <person name="Durstewitz G."/>
            <person name="Casaregola S."/>
            <person name="Gaillardin C."/>
            <person name="Brandt U."/>
        </authorList>
    </citation>
    <scope>NUCLEOTIDE SEQUENCE [LARGE SCALE GENOMIC DNA]</scope>
    <source>
        <strain>ATCC 20460 / W29 / CBS 7504 / IFP29</strain>
    </source>
</reference>
<reference key="2">
    <citation type="journal article" date="2004" name="Biochim. Biophys. Acta">
        <title>Subunit composition of mitochondrial complex I from the yeast Yarrowia lipolytica.</title>
        <authorList>
            <person name="Abdrakhmanova A."/>
            <person name="Zickermann V."/>
            <person name="Bostina M."/>
            <person name="Radermacher M."/>
            <person name="Schagger H."/>
            <person name="Kerscher S."/>
            <person name="Brandt U."/>
        </authorList>
    </citation>
    <scope>SUBUNIT</scope>
</reference>
<gene>
    <name type="primary">ND4L</name>
</gene>
<sequence>MFIGTIILVLSFLGFVFNRRNIILAFICLETMLLGINLILLRNSVLFDDISGSLFAIVIIILAGVESAIGLSLLVSYYRLRGVINSYGI</sequence>
<name>NU4LM_YARLI</name>
<dbReference type="EC" id="7.1.1.2"/>
<dbReference type="EMBL" id="AJ307410">
    <property type="protein sequence ID" value="CAC28106.2"/>
    <property type="molecule type" value="Genomic_DNA"/>
</dbReference>
<dbReference type="RefSeq" id="NP_075439.2">
    <property type="nucleotide sequence ID" value="NC_002659.1"/>
</dbReference>
<dbReference type="PDB" id="4WZ7">
    <property type="method" value="X-ray"/>
    <property type="resolution" value="3.60 A"/>
    <property type="chains" value="L=1-89"/>
</dbReference>
<dbReference type="PDB" id="6GCS">
    <property type="method" value="EM"/>
    <property type="resolution" value="4.32 A"/>
    <property type="chains" value="L=1-86"/>
</dbReference>
<dbReference type="PDB" id="6H8K">
    <property type="method" value="X-ray"/>
    <property type="resolution" value="3.79 A"/>
    <property type="chains" value="L=1-79"/>
</dbReference>
<dbReference type="PDB" id="6RFQ">
    <property type="method" value="EM"/>
    <property type="resolution" value="3.30 A"/>
    <property type="chains" value="L=1-89"/>
</dbReference>
<dbReference type="PDB" id="6RFR">
    <property type="method" value="EM"/>
    <property type="resolution" value="3.20 A"/>
    <property type="chains" value="L=1-89"/>
</dbReference>
<dbReference type="PDB" id="6RFS">
    <property type="method" value="EM"/>
    <property type="resolution" value="4.04 A"/>
    <property type="chains" value="L=1-89"/>
</dbReference>
<dbReference type="PDB" id="6Y79">
    <property type="method" value="EM"/>
    <property type="resolution" value="3.20 A"/>
    <property type="chains" value="L=1-89"/>
</dbReference>
<dbReference type="PDB" id="6YJ4">
    <property type="method" value="EM"/>
    <property type="resolution" value="2.70 A"/>
    <property type="chains" value="K=1-89"/>
</dbReference>
<dbReference type="PDB" id="7O6Y">
    <property type="method" value="EM"/>
    <property type="resolution" value="3.40 A"/>
    <property type="chains" value="L=1-89"/>
</dbReference>
<dbReference type="PDB" id="7O71">
    <property type="method" value="EM"/>
    <property type="resolution" value="2.40 A"/>
    <property type="chains" value="L=1-89"/>
</dbReference>
<dbReference type="PDB" id="7ZKP">
    <property type="method" value="EM"/>
    <property type="resolution" value="3.20 A"/>
    <property type="chains" value="L=1-89"/>
</dbReference>
<dbReference type="PDBsum" id="4WZ7"/>
<dbReference type="PDBsum" id="6GCS"/>
<dbReference type="PDBsum" id="6H8K"/>
<dbReference type="PDBsum" id="6RFQ"/>
<dbReference type="PDBsum" id="6RFR"/>
<dbReference type="PDBsum" id="6RFS"/>
<dbReference type="PDBsum" id="6Y79"/>
<dbReference type="PDBsum" id="6YJ4"/>
<dbReference type="PDBsum" id="7O6Y"/>
<dbReference type="PDBsum" id="7O71"/>
<dbReference type="PDBsum" id="7ZKP"/>
<dbReference type="EMDB" id="EMD-10711"/>
<dbReference type="EMDB" id="EMD-10815"/>
<dbReference type="EMDB" id="EMD-12741"/>
<dbReference type="EMDB" id="EMD-12742"/>
<dbReference type="EMDB" id="EMD-4384"/>
<dbReference type="EMDB" id="EMD-4872"/>
<dbReference type="EMDB" id="EMD-4873"/>
<dbReference type="EMDB" id="EMD-4874"/>
<dbReference type="SMR" id="Q9B6D4"/>
<dbReference type="DIP" id="DIP-61440N"/>
<dbReference type="IntAct" id="Q9B6D4">
    <property type="interactions" value="2"/>
</dbReference>
<dbReference type="STRING" id="284591.Q9B6D4"/>
<dbReference type="GeneID" id="802609"/>
<dbReference type="KEGG" id="yli:802609"/>
<dbReference type="InParanoid" id="Q9B6D4"/>
<dbReference type="Proteomes" id="UP000001300">
    <property type="component" value="Mitochondrion"/>
</dbReference>
<dbReference type="GO" id="GO:0031966">
    <property type="term" value="C:mitochondrial membrane"/>
    <property type="evidence" value="ECO:0007669"/>
    <property type="project" value="UniProtKB-SubCell"/>
</dbReference>
<dbReference type="GO" id="GO:0045271">
    <property type="term" value="C:respiratory chain complex I"/>
    <property type="evidence" value="ECO:0000318"/>
    <property type="project" value="GO_Central"/>
</dbReference>
<dbReference type="GO" id="GO:0008137">
    <property type="term" value="F:NADH dehydrogenase (ubiquinone) activity"/>
    <property type="evidence" value="ECO:0007669"/>
    <property type="project" value="UniProtKB-EC"/>
</dbReference>
<dbReference type="GO" id="GO:0042773">
    <property type="term" value="P:ATP synthesis coupled electron transport"/>
    <property type="evidence" value="ECO:0007669"/>
    <property type="project" value="InterPro"/>
</dbReference>
<dbReference type="FunFam" id="1.10.287.3510:FF:000004">
    <property type="entry name" value="NADH-ubiquinone oxidoreductase chain 4L"/>
    <property type="match status" value="1"/>
</dbReference>
<dbReference type="Gene3D" id="1.10.287.3510">
    <property type="match status" value="1"/>
</dbReference>
<dbReference type="InterPro" id="IPR001133">
    <property type="entry name" value="NADH_UbQ_OxRdtase_chain4L/K"/>
</dbReference>
<dbReference type="InterPro" id="IPR039428">
    <property type="entry name" value="NUOK/Mnh_C1-like"/>
</dbReference>
<dbReference type="PANTHER" id="PTHR11434:SF16">
    <property type="entry name" value="NADH-UBIQUINONE OXIDOREDUCTASE CHAIN 4L"/>
    <property type="match status" value="1"/>
</dbReference>
<dbReference type="PANTHER" id="PTHR11434">
    <property type="entry name" value="NADH-UBIQUINONE OXIDOREDUCTASE SUBUNIT ND4L"/>
    <property type="match status" value="1"/>
</dbReference>
<dbReference type="Pfam" id="PF00420">
    <property type="entry name" value="Oxidored_q2"/>
    <property type="match status" value="1"/>
</dbReference>
<organism>
    <name type="scientific">Yarrowia lipolytica (strain CLIB 122 / E 150)</name>
    <name type="common">Yeast</name>
    <name type="synonym">Candida lipolytica</name>
    <dbReference type="NCBI Taxonomy" id="284591"/>
    <lineage>
        <taxon>Eukaryota</taxon>
        <taxon>Fungi</taxon>
        <taxon>Dikarya</taxon>
        <taxon>Ascomycota</taxon>
        <taxon>Saccharomycotina</taxon>
        <taxon>Dipodascomycetes</taxon>
        <taxon>Dipodascales</taxon>
        <taxon>Dipodascales incertae sedis</taxon>
        <taxon>Yarrowia</taxon>
    </lineage>
</organism>
<feature type="chain" id="PRO_0000118501" description="NADH-ubiquinone oxidoreductase chain 4L">
    <location>
        <begin position="1"/>
        <end position="89"/>
    </location>
</feature>
<feature type="transmembrane region" description="Helical" evidence="2">
    <location>
        <begin position="21"/>
        <end position="41"/>
    </location>
</feature>
<feature type="transmembrane region" description="Helical" evidence="2">
    <location>
        <begin position="55"/>
        <end position="75"/>
    </location>
</feature>
<feature type="helix" evidence="5">
    <location>
        <begin position="2"/>
        <end position="16"/>
    </location>
</feature>
<feature type="helix" evidence="5">
    <location>
        <begin position="22"/>
        <end position="47"/>
    </location>
</feature>
<feature type="helix" evidence="5">
    <location>
        <begin position="50"/>
        <end position="81"/>
    </location>
</feature>
<feature type="strand" evidence="5">
    <location>
        <begin position="82"/>
        <end position="84"/>
    </location>
</feature>
<comment type="function">
    <text>Core subunit of the mitochondrial membrane respiratory chain NADH dehydrogenase (Complex I) that is believed to belong to the minimal assembly required for catalysis. Complex I functions in the transfer of electrons from NADH to the respiratory chain. The immediate electron acceptor for the enzyme is believed to be ubiquinone.</text>
</comment>
<comment type="catalytic activity">
    <reaction>
        <text>a ubiquinone + NADH + 5 H(+)(in) = a ubiquinol + NAD(+) + 4 H(+)(out)</text>
        <dbReference type="Rhea" id="RHEA:29091"/>
        <dbReference type="Rhea" id="RHEA-COMP:9565"/>
        <dbReference type="Rhea" id="RHEA-COMP:9566"/>
        <dbReference type="ChEBI" id="CHEBI:15378"/>
        <dbReference type="ChEBI" id="CHEBI:16389"/>
        <dbReference type="ChEBI" id="CHEBI:17976"/>
        <dbReference type="ChEBI" id="CHEBI:57540"/>
        <dbReference type="ChEBI" id="CHEBI:57945"/>
        <dbReference type="EC" id="7.1.1.2"/>
    </reaction>
</comment>
<comment type="subunit">
    <text evidence="3">Complex I is composed of 37 different subunits.</text>
</comment>
<comment type="subcellular location">
    <subcellularLocation>
        <location evidence="1">Mitochondrion membrane</location>
        <topology evidence="1">Multi-pass membrane protein</topology>
    </subcellularLocation>
</comment>
<comment type="similarity">
    <text evidence="4">Belongs to the complex I subunit 4L family.</text>
</comment>
<protein>
    <recommendedName>
        <fullName>NADH-ubiquinone oxidoreductase chain 4L</fullName>
        <ecNumber>7.1.1.2</ecNumber>
    </recommendedName>
    <alternativeName>
        <fullName>NADH dehydrogenase subunit 4L</fullName>
    </alternativeName>
</protein>